<name>EFTU_RICCN</name>
<reference key="1">
    <citation type="journal article" date="2001" name="Science">
        <title>Mechanisms of evolution in Rickettsia conorii and R. prowazekii.</title>
        <authorList>
            <person name="Ogata H."/>
            <person name="Audic S."/>
            <person name="Renesto-Audiffren P."/>
            <person name="Fournier P.-E."/>
            <person name="Barbe V."/>
            <person name="Samson D."/>
            <person name="Roux V."/>
            <person name="Cossart P."/>
            <person name="Weissenbach J."/>
            <person name="Claverie J.-M."/>
            <person name="Raoult D."/>
        </authorList>
    </citation>
    <scope>NUCLEOTIDE SEQUENCE [LARGE SCALE GENOMIC DNA]</scope>
    <source>
        <strain>ATCC VR-613 / Malish 7</strain>
    </source>
</reference>
<comment type="function">
    <text evidence="2">GTP hydrolase that promotes the GTP-dependent binding of aminoacyl-tRNA to the A-site of ribosomes during protein biosynthesis.</text>
</comment>
<comment type="catalytic activity">
    <reaction evidence="2">
        <text>GTP + H2O = GDP + phosphate + H(+)</text>
        <dbReference type="Rhea" id="RHEA:19669"/>
        <dbReference type="ChEBI" id="CHEBI:15377"/>
        <dbReference type="ChEBI" id="CHEBI:15378"/>
        <dbReference type="ChEBI" id="CHEBI:37565"/>
        <dbReference type="ChEBI" id="CHEBI:43474"/>
        <dbReference type="ChEBI" id="CHEBI:58189"/>
        <dbReference type="EC" id="3.6.5.3"/>
    </reaction>
    <physiologicalReaction direction="left-to-right" evidence="2">
        <dbReference type="Rhea" id="RHEA:19670"/>
    </physiologicalReaction>
</comment>
<comment type="subunit">
    <text evidence="2">Monomer.</text>
</comment>
<comment type="subcellular location">
    <subcellularLocation>
        <location evidence="2">Cytoplasm</location>
    </subcellularLocation>
</comment>
<comment type="similarity">
    <text evidence="2">Belongs to the TRAFAC class translation factor GTPase superfamily. Classic translation factor GTPase family. EF-Tu/EF-1A subfamily.</text>
</comment>
<gene>
    <name evidence="2" type="primary">tuf</name>
    <name type="ordered locus">RC1008</name>
</gene>
<feature type="chain" id="PRO_0000091373" description="Elongation factor Tu">
    <location>
        <begin position="1"/>
        <end position="394"/>
    </location>
</feature>
<feature type="domain" description="tr-type G">
    <location>
        <begin position="10"/>
        <end position="204"/>
    </location>
</feature>
<feature type="region of interest" description="G1" evidence="1">
    <location>
        <begin position="19"/>
        <end position="26"/>
    </location>
</feature>
<feature type="region of interest" description="G2" evidence="1">
    <location>
        <begin position="60"/>
        <end position="64"/>
    </location>
</feature>
<feature type="region of interest" description="G3" evidence="1">
    <location>
        <begin position="81"/>
        <end position="84"/>
    </location>
</feature>
<feature type="region of interest" description="G4" evidence="1">
    <location>
        <begin position="136"/>
        <end position="139"/>
    </location>
</feature>
<feature type="region of interest" description="G5" evidence="1">
    <location>
        <begin position="174"/>
        <end position="176"/>
    </location>
</feature>
<feature type="binding site" evidence="2">
    <location>
        <begin position="19"/>
        <end position="26"/>
    </location>
    <ligand>
        <name>GTP</name>
        <dbReference type="ChEBI" id="CHEBI:37565"/>
    </ligand>
</feature>
<feature type="binding site" evidence="2">
    <location>
        <position position="26"/>
    </location>
    <ligand>
        <name>Mg(2+)</name>
        <dbReference type="ChEBI" id="CHEBI:18420"/>
    </ligand>
</feature>
<feature type="binding site" evidence="2">
    <location>
        <begin position="81"/>
        <end position="85"/>
    </location>
    <ligand>
        <name>GTP</name>
        <dbReference type="ChEBI" id="CHEBI:37565"/>
    </ligand>
</feature>
<feature type="binding site" evidence="2">
    <location>
        <begin position="136"/>
        <end position="139"/>
    </location>
    <ligand>
        <name>GTP</name>
        <dbReference type="ChEBI" id="CHEBI:37565"/>
    </ligand>
</feature>
<dbReference type="EC" id="3.6.5.3" evidence="2"/>
<dbReference type="EMBL" id="AE006914">
    <property type="protein sequence ID" value="AAL03546.1"/>
    <property type="molecule type" value="Genomic_DNA"/>
</dbReference>
<dbReference type="PIR" id="H97825">
    <property type="entry name" value="H97825"/>
</dbReference>
<dbReference type="RefSeq" id="WP_010977589.1">
    <property type="nucleotide sequence ID" value="NC_003103.1"/>
</dbReference>
<dbReference type="SMR" id="Q92GW4"/>
<dbReference type="GeneID" id="928150"/>
<dbReference type="KEGG" id="rco:RC1008"/>
<dbReference type="PATRIC" id="fig|272944.4.peg.1149"/>
<dbReference type="HOGENOM" id="CLU_007265_0_0_5"/>
<dbReference type="Proteomes" id="UP000000816">
    <property type="component" value="Chromosome"/>
</dbReference>
<dbReference type="GO" id="GO:0005737">
    <property type="term" value="C:cytoplasm"/>
    <property type="evidence" value="ECO:0007669"/>
    <property type="project" value="UniProtKB-SubCell"/>
</dbReference>
<dbReference type="GO" id="GO:0005525">
    <property type="term" value="F:GTP binding"/>
    <property type="evidence" value="ECO:0007669"/>
    <property type="project" value="UniProtKB-UniRule"/>
</dbReference>
<dbReference type="GO" id="GO:0003924">
    <property type="term" value="F:GTPase activity"/>
    <property type="evidence" value="ECO:0007669"/>
    <property type="project" value="InterPro"/>
</dbReference>
<dbReference type="GO" id="GO:0097216">
    <property type="term" value="F:guanosine tetraphosphate binding"/>
    <property type="evidence" value="ECO:0007669"/>
    <property type="project" value="UniProtKB-ARBA"/>
</dbReference>
<dbReference type="GO" id="GO:0003746">
    <property type="term" value="F:translation elongation factor activity"/>
    <property type="evidence" value="ECO:0007669"/>
    <property type="project" value="UniProtKB-UniRule"/>
</dbReference>
<dbReference type="CDD" id="cd01884">
    <property type="entry name" value="EF_Tu"/>
    <property type="match status" value="1"/>
</dbReference>
<dbReference type="CDD" id="cd03697">
    <property type="entry name" value="EFTU_II"/>
    <property type="match status" value="1"/>
</dbReference>
<dbReference type="CDD" id="cd03707">
    <property type="entry name" value="EFTU_III"/>
    <property type="match status" value="1"/>
</dbReference>
<dbReference type="FunFam" id="2.40.30.10:FF:000001">
    <property type="entry name" value="Elongation factor Tu"/>
    <property type="match status" value="1"/>
</dbReference>
<dbReference type="FunFam" id="3.40.50.300:FF:000003">
    <property type="entry name" value="Elongation factor Tu"/>
    <property type="match status" value="1"/>
</dbReference>
<dbReference type="Gene3D" id="3.40.50.300">
    <property type="entry name" value="P-loop containing nucleotide triphosphate hydrolases"/>
    <property type="match status" value="1"/>
</dbReference>
<dbReference type="Gene3D" id="2.40.30.10">
    <property type="entry name" value="Translation factors"/>
    <property type="match status" value="2"/>
</dbReference>
<dbReference type="HAMAP" id="MF_00118_B">
    <property type="entry name" value="EF_Tu_B"/>
    <property type="match status" value="1"/>
</dbReference>
<dbReference type="InterPro" id="IPR041709">
    <property type="entry name" value="EF-Tu_GTP-bd"/>
</dbReference>
<dbReference type="InterPro" id="IPR050055">
    <property type="entry name" value="EF-Tu_GTPase"/>
</dbReference>
<dbReference type="InterPro" id="IPR004161">
    <property type="entry name" value="EFTu-like_2"/>
</dbReference>
<dbReference type="InterPro" id="IPR033720">
    <property type="entry name" value="EFTU_2"/>
</dbReference>
<dbReference type="InterPro" id="IPR031157">
    <property type="entry name" value="G_TR_CS"/>
</dbReference>
<dbReference type="InterPro" id="IPR027417">
    <property type="entry name" value="P-loop_NTPase"/>
</dbReference>
<dbReference type="InterPro" id="IPR005225">
    <property type="entry name" value="Small_GTP-bd"/>
</dbReference>
<dbReference type="InterPro" id="IPR000795">
    <property type="entry name" value="T_Tr_GTP-bd_dom"/>
</dbReference>
<dbReference type="InterPro" id="IPR009000">
    <property type="entry name" value="Transl_B-barrel_sf"/>
</dbReference>
<dbReference type="InterPro" id="IPR009001">
    <property type="entry name" value="Transl_elong_EF1A/Init_IF2_C"/>
</dbReference>
<dbReference type="InterPro" id="IPR004541">
    <property type="entry name" value="Transl_elong_EFTu/EF1A_bac/org"/>
</dbReference>
<dbReference type="InterPro" id="IPR004160">
    <property type="entry name" value="Transl_elong_EFTu/EF1A_C"/>
</dbReference>
<dbReference type="NCBIfam" id="TIGR00485">
    <property type="entry name" value="EF-Tu"/>
    <property type="match status" value="1"/>
</dbReference>
<dbReference type="NCBIfam" id="NF000766">
    <property type="entry name" value="PRK00049.1"/>
    <property type="match status" value="1"/>
</dbReference>
<dbReference type="NCBIfam" id="NF009372">
    <property type="entry name" value="PRK12735.1"/>
    <property type="match status" value="1"/>
</dbReference>
<dbReference type="NCBIfam" id="NF009373">
    <property type="entry name" value="PRK12736.1"/>
    <property type="match status" value="1"/>
</dbReference>
<dbReference type="NCBIfam" id="TIGR00231">
    <property type="entry name" value="small_GTP"/>
    <property type="match status" value="1"/>
</dbReference>
<dbReference type="PANTHER" id="PTHR43721:SF22">
    <property type="entry name" value="ELONGATION FACTOR TU, MITOCHONDRIAL"/>
    <property type="match status" value="1"/>
</dbReference>
<dbReference type="PANTHER" id="PTHR43721">
    <property type="entry name" value="ELONGATION FACTOR TU-RELATED"/>
    <property type="match status" value="1"/>
</dbReference>
<dbReference type="Pfam" id="PF00009">
    <property type="entry name" value="GTP_EFTU"/>
    <property type="match status" value="1"/>
</dbReference>
<dbReference type="Pfam" id="PF03144">
    <property type="entry name" value="GTP_EFTU_D2"/>
    <property type="match status" value="1"/>
</dbReference>
<dbReference type="Pfam" id="PF03143">
    <property type="entry name" value="GTP_EFTU_D3"/>
    <property type="match status" value="1"/>
</dbReference>
<dbReference type="PRINTS" id="PR00315">
    <property type="entry name" value="ELONGATNFCT"/>
</dbReference>
<dbReference type="SUPFAM" id="SSF50465">
    <property type="entry name" value="EF-Tu/eEF-1alpha/eIF2-gamma C-terminal domain"/>
    <property type="match status" value="1"/>
</dbReference>
<dbReference type="SUPFAM" id="SSF52540">
    <property type="entry name" value="P-loop containing nucleoside triphosphate hydrolases"/>
    <property type="match status" value="1"/>
</dbReference>
<dbReference type="SUPFAM" id="SSF50447">
    <property type="entry name" value="Translation proteins"/>
    <property type="match status" value="1"/>
</dbReference>
<dbReference type="PROSITE" id="PS00301">
    <property type="entry name" value="G_TR_1"/>
    <property type="match status" value="1"/>
</dbReference>
<dbReference type="PROSITE" id="PS51722">
    <property type="entry name" value="G_TR_2"/>
    <property type="match status" value="1"/>
</dbReference>
<proteinExistence type="inferred from homology"/>
<evidence type="ECO:0000250" key="1"/>
<evidence type="ECO:0000255" key="2">
    <source>
        <dbReference type="HAMAP-Rule" id="MF_00118"/>
    </source>
</evidence>
<protein>
    <recommendedName>
        <fullName evidence="2">Elongation factor Tu</fullName>
        <shortName evidence="2">EF-Tu</shortName>
        <ecNumber evidence="2">3.6.5.3</ecNumber>
    </recommendedName>
</protein>
<organism>
    <name type="scientific">Rickettsia conorii (strain ATCC VR-613 / Malish 7)</name>
    <dbReference type="NCBI Taxonomy" id="272944"/>
    <lineage>
        <taxon>Bacteria</taxon>
        <taxon>Pseudomonadati</taxon>
        <taxon>Pseudomonadota</taxon>
        <taxon>Alphaproteobacteria</taxon>
        <taxon>Rickettsiales</taxon>
        <taxon>Rickettsiaceae</taxon>
        <taxon>Rickettsieae</taxon>
        <taxon>Rickettsia</taxon>
        <taxon>spotted fever group</taxon>
    </lineage>
</organism>
<sequence length="394" mass="42868">MAKAKFERTKPHVNIGTIGHVDHGKTSLTAAITIVLAKTGGAQATAYDQIDAAPEEKERGITISTAHVEYETQNRHYAHVDCPGHADYVKNMITGAAQMDGAILVVSAADGPMPQTREHILLAKQVGVPAMVVFLNKIDMVDDPDLLELVEMEVRELLSKYGFPGDEIPIIKGSALQALEGKPEGEKAINELMDAVDSYIPQPVRATDKPFLMPIEDVFSISGRGTVVTGRVESGIIKVGEEIEIVGLKDTQKTTCTGVEMFRKLLDEGQAGDNVGILLRGTKREEVERGQVLAKPGSIKPHDKFEAEVYVLSKEEGGRHTPFTNDYRPQFYFRTTDVTGTIKLSADKQMVMPGDNATFTVELIKPIAMQEGLKFSIREGGRTVGAGVVTKINN</sequence>
<accession>Q92GW4</accession>
<keyword id="KW-0963">Cytoplasm</keyword>
<keyword id="KW-0251">Elongation factor</keyword>
<keyword id="KW-0342">GTP-binding</keyword>
<keyword id="KW-0378">Hydrolase</keyword>
<keyword id="KW-0460">Magnesium</keyword>
<keyword id="KW-0479">Metal-binding</keyword>
<keyword id="KW-0547">Nucleotide-binding</keyword>
<keyword id="KW-0648">Protein biosynthesis</keyword>